<geneLocation type="chloroplast"/>
<dbReference type="EMBL" id="AM777385">
    <property type="protein sequence ID" value="CAO85957.1"/>
    <property type="molecule type" value="Genomic_DNA"/>
</dbReference>
<dbReference type="EMBL" id="DQ786925">
    <property type="protein sequence ID" value="ABH02762.1"/>
    <property type="molecule type" value="Genomic_DNA"/>
</dbReference>
<dbReference type="RefSeq" id="YP_001531264.1">
    <property type="nucleotide sequence ID" value="NC_009950.1"/>
</dbReference>
<dbReference type="GeneID" id="5696561"/>
<dbReference type="KEGG" id="lper:5696561"/>
<dbReference type="GO" id="GO:0009507">
    <property type="term" value="C:chloroplast"/>
    <property type="evidence" value="ECO:0007669"/>
    <property type="project" value="UniProtKB-SubCell"/>
</dbReference>
<dbReference type="GO" id="GO:0003723">
    <property type="term" value="F:RNA binding"/>
    <property type="evidence" value="ECO:0007669"/>
    <property type="project" value="UniProtKB-KW"/>
</dbReference>
<dbReference type="GO" id="GO:0006397">
    <property type="term" value="P:mRNA processing"/>
    <property type="evidence" value="ECO:0007669"/>
    <property type="project" value="UniProtKB-KW"/>
</dbReference>
<dbReference type="GO" id="GO:0008380">
    <property type="term" value="P:RNA splicing"/>
    <property type="evidence" value="ECO:0007669"/>
    <property type="project" value="UniProtKB-UniRule"/>
</dbReference>
<dbReference type="GO" id="GO:0008033">
    <property type="term" value="P:tRNA processing"/>
    <property type="evidence" value="ECO:0007669"/>
    <property type="project" value="UniProtKB-KW"/>
</dbReference>
<dbReference type="HAMAP" id="MF_01390">
    <property type="entry name" value="MatK"/>
    <property type="match status" value="1"/>
</dbReference>
<dbReference type="InterPro" id="IPR024937">
    <property type="entry name" value="Domain_X"/>
</dbReference>
<dbReference type="InterPro" id="IPR002866">
    <property type="entry name" value="Maturase_MatK"/>
</dbReference>
<dbReference type="InterPro" id="IPR024942">
    <property type="entry name" value="Maturase_MatK_N"/>
</dbReference>
<dbReference type="PANTHER" id="PTHR34811">
    <property type="entry name" value="MATURASE K"/>
    <property type="match status" value="1"/>
</dbReference>
<dbReference type="PANTHER" id="PTHR34811:SF1">
    <property type="entry name" value="MATURASE K"/>
    <property type="match status" value="1"/>
</dbReference>
<dbReference type="Pfam" id="PF01348">
    <property type="entry name" value="Intron_maturas2"/>
    <property type="match status" value="1"/>
</dbReference>
<dbReference type="Pfam" id="PF01824">
    <property type="entry name" value="MatK_N"/>
    <property type="match status" value="1"/>
</dbReference>
<protein>
    <recommendedName>
        <fullName evidence="1">Maturase K</fullName>
    </recommendedName>
    <alternativeName>
        <fullName evidence="1">Intron maturase</fullName>
    </alternativeName>
</protein>
<sequence length="511" mass="61337">MEKFEGYSEKHKSRQQYFVYPLLFQEYIYAFAHDYGLNDFEPVEIFSCNNKKFSSLLVKRLIIRMYQQSFWMNSVNHPNQDRLLDYKIGFYSEFYSQILSEGFAIVVETPFSLRELPCPKEKEIPKFQNLHSIHSIFSFLEDKFVHLDYLSHIEIPYPIHLEILVQLLQYRIQDVPSLHLLRFFLNNYSNWNSFITSMKSIFLLKKENKRLFRFLYNSYVSEYEFFLLFLRKQSSCLPLAASGTFLERIHFSKKMEHFWIMYPGFFRKTIWFFMDPLMHYVRYQGKALFASKGTPFLNKKWKWYLINLWQYCFSFWTQPRRIHLNQLANSCFDFMGYLSSVPKSPFLVKNQMLDNSFLIDTLIQKLDTIVPATALIGYLSKAQFCTGSGHPISKPIWTDLSDWDILDRFGRICRNLFHYHSGSSKKRTLYRLKYILRLSCARTLARKHKSTVRTFMQRLGSAFLEEFFTEEELVFSLMFTKTTLCSFRGSHSERIWYFDIIRINDLVKPLN</sequence>
<evidence type="ECO:0000255" key="1">
    <source>
        <dbReference type="HAMAP-Rule" id="MF_01390"/>
    </source>
</evidence>
<proteinExistence type="inferred from homology"/>
<gene>
    <name evidence="1" type="primary">matK</name>
    <name type="ordered locus">LopeCp003</name>
</gene>
<name>MATK_LOLPR</name>
<accession>A8Y9F1</accession>
<reference key="1">
    <citation type="journal article" date="2008" name="PLoS ONE">
        <title>An optimized chloroplast DNA extraction protocol for grasses (Poaceae) proves suitable for whole plastid genome sequencing and SNP detection.</title>
        <authorList>
            <person name="Diekmann K."/>
            <person name="Hodkinson T.R."/>
            <person name="Fricke E."/>
            <person name="Barth S."/>
        </authorList>
    </citation>
    <scope>NUCLEOTIDE SEQUENCE [LARGE SCALE GENOMIC DNA]</scope>
    <source>
        <strain>cv. Cashel</strain>
    </source>
</reference>
<reference key="2">
    <citation type="submission" date="2006-06" db="EMBL/GenBank/DDBJ databases">
        <title>A phylogenetic analysis of Poaceae tribe Poeae s.l. based on morphological characters and sequence data from three plastid-encoded genes.</title>
        <authorList>
            <person name="Soreng R.J."/>
            <person name="Davis J.I."/>
            <person name="Voionmaa M.A."/>
        </authorList>
    </citation>
    <scope>NUCLEOTIDE SEQUENCE [GENOMIC DNA]</scope>
</reference>
<keyword id="KW-0150">Chloroplast</keyword>
<keyword id="KW-0507">mRNA processing</keyword>
<keyword id="KW-0934">Plastid</keyword>
<keyword id="KW-0694">RNA-binding</keyword>
<keyword id="KW-0819">tRNA processing</keyword>
<organism>
    <name type="scientific">Lolium perenne</name>
    <name type="common">Perennial ryegrass</name>
    <dbReference type="NCBI Taxonomy" id="4522"/>
    <lineage>
        <taxon>Eukaryota</taxon>
        <taxon>Viridiplantae</taxon>
        <taxon>Streptophyta</taxon>
        <taxon>Embryophyta</taxon>
        <taxon>Tracheophyta</taxon>
        <taxon>Spermatophyta</taxon>
        <taxon>Magnoliopsida</taxon>
        <taxon>Liliopsida</taxon>
        <taxon>Poales</taxon>
        <taxon>Poaceae</taxon>
        <taxon>BOP clade</taxon>
        <taxon>Pooideae</taxon>
        <taxon>Poodae</taxon>
        <taxon>Poeae</taxon>
        <taxon>Poeae Chloroplast Group 2 (Poeae type)</taxon>
        <taxon>Loliodinae</taxon>
        <taxon>Loliinae</taxon>
        <taxon>Lolium</taxon>
    </lineage>
</organism>
<comment type="function">
    <text evidence="1">Usually encoded in the trnK tRNA gene intron. Probably assists in splicing its own and other chloroplast group II introns.</text>
</comment>
<comment type="subcellular location">
    <subcellularLocation>
        <location>Plastid</location>
        <location>Chloroplast</location>
    </subcellularLocation>
</comment>
<comment type="similarity">
    <text evidence="1">Belongs to the intron maturase 2 family. MatK subfamily.</text>
</comment>
<feature type="chain" id="PRO_0000355945" description="Maturase K">
    <location>
        <begin position="1"/>
        <end position="511"/>
    </location>
</feature>